<proteinExistence type="inferred from homology"/>
<accession>Q9I468</accession>
<sequence>MLEHGGRLREAARRYDIPLADWLDLSTGIAPWPFSLPAIPEQAWTRLPESDDGLEAAACLYYGAERVLPLAGSQAAIQALPRMRRGGRVGVLSPCYAEHAHAWRQAGHLVREIGEAEVEPYLDSLDVLLVVNPNNPTGRVFEPAELLAWHARLQRRGGWLLVDEAFMDCTPQSSLAACSNRPGLIVLRSFGKFFGLAGARLGFALGERPLLQALAEQLGPWTVNGPVRHVAQSALRDRQQQRQQRERLLAASQRLEELLRRHGWPPAGGSALFQRLVDPRCAALHDYLARRGILTRQFEQPASLRLGLPADEAAWARLDAALLGFKEPAHE</sequence>
<reference key="1">
    <citation type="journal article" date="2000" name="Nature">
        <title>Complete genome sequence of Pseudomonas aeruginosa PAO1, an opportunistic pathogen.</title>
        <authorList>
            <person name="Stover C.K."/>
            <person name="Pham X.-Q.T."/>
            <person name="Erwin A.L."/>
            <person name="Mizoguchi S.D."/>
            <person name="Warrener P."/>
            <person name="Hickey M.J."/>
            <person name="Brinkman F.S.L."/>
            <person name="Hufnagle W.O."/>
            <person name="Kowalik D.J."/>
            <person name="Lagrou M."/>
            <person name="Garber R.L."/>
            <person name="Goltry L."/>
            <person name="Tolentino E."/>
            <person name="Westbrock-Wadman S."/>
            <person name="Yuan Y."/>
            <person name="Brody L.L."/>
            <person name="Coulter S.N."/>
            <person name="Folger K.R."/>
            <person name="Kas A."/>
            <person name="Larbig K."/>
            <person name="Lim R.M."/>
            <person name="Smith K.A."/>
            <person name="Spencer D.H."/>
            <person name="Wong G.K.-S."/>
            <person name="Wu Z."/>
            <person name="Paulsen I.T."/>
            <person name="Reizer J."/>
            <person name="Saier M.H. Jr."/>
            <person name="Hancock R.E.W."/>
            <person name="Lory S."/>
            <person name="Olson M.V."/>
        </authorList>
    </citation>
    <scope>NUCLEOTIDE SEQUENCE [LARGE SCALE GENOMIC DNA]</scope>
    <source>
        <strain>ATCC 15692 / DSM 22644 / CIP 104116 / JCM 14847 / LMG 12228 / 1C / PRS 101 / PAO1</strain>
    </source>
</reference>
<evidence type="ECO:0000250" key="1"/>
<evidence type="ECO:0000305" key="2"/>
<name>COBC_PSEAE</name>
<keyword id="KW-0169">Cobalamin biosynthesis</keyword>
<keyword id="KW-0963">Cytoplasm</keyword>
<keyword id="KW-0456">Lyase</keyword>
<keyword id="KW-0663">Pyridoxal phosphate</keyword>
<keyword id="KW-1185">Reference proteome</keyword>
<organism>
    <name type="scientific">Pseudomonas aeruginosa (strain ATCC 15692 / DSM 22644 / CIP 104116 / JCM 14847 / LMG 12228 / 1C / PRS 101 / PAO1)</name>
    <dbReference type="NCBI Taxonomy" id="208964"/>
    <lineage>
        <taxon>Bacteria</taxon>
        <taxon>Pseudomonadati</taxon>
        <taxon>Pseudomonadota</taxon>
        <taxon>Gammaproteobacteria</taxon>
        <taxon>Pseudomonadales</taxon>
        <taxon>Pseudomonadaceae</taxon>
        <taxon>Pseudomonas</taxon>
    </lineage>
</organism>
<gene>
    <name type="primary">cobC</name>
    <name type="ordered locus">PA1276</name>
</gene>
<comment type="function">
    <text evidence="1">Decarboxylates L-threonine-O-3-phosphate to yield (R)-1-amino-2-propanol O-2-phosphate, the precursor for the linkage between the nucleotide loop and the corrin ring in cobalamin.</text>
</comment>
<comment type="catalytic activity">
    <reaction>
        <text>O-phospho-L-threonine + H(+) = (R)-1-aminopropan-2-yl phosphate + CO2</text>
        <dbReference type="Rhea" id="RHEA:11492"/>
        <dbReference type="ChEBI" id="CHEBI:15378"/>
        <dbReference type="ChEBI" id="CHEBI:16526"/>
        <dbReference type="ChEBI" id="CHEBI:58563"/>
        <dbReference type="ChEBI" id="CHEBI:58675"/>
        <dbReference type="EC" id="4.1.1.81"/>
    </reaction>
</comment>
<comment type="cofactor">
    <cofactor evidence="2">
        <name>pyridoxal 5'-phosphate</name>
        <dbReference type="ChEBI" id="CHEBI:597326"/>
    </cofactor>
</comment>
<comment type="pathway">
    <text>Cofactor biosynthesis; adenosylcobalamin biosynthesis.</text>
</comment>
<comment type="subunit">
    <text evidence="1">Homodimer.</text>
</comment>
<comment type="subcellular location">
    <subcellularLocation>
        <location evidence="1">Cytoplasm</location>
    </subcellularLocation>
</comment>
<comment type="similarity">
    <text evidence="2">Belongs to the class-I pyridoxal-phosphate-dependent aminotransferase family.</text>
</comment>
<protein>
    <recommendedName>
        <fullName>Threonine-phosphate decarboxylase</fullName>
        <ecNumber>4.1.1.81</ecNumber>
    </recommendedName>
    <alternativeName>
        <fullName>L-threonine-O-3-phosphate decarboxylase</fullName>
    </alternativeName>
</protein>
<feature type="chain" id="PRO_0000287744" description="Threonine-phosphate decarboxylase">
    <location>
        <begin position="1"/>
        <end position="331"/>
    </location>
</feature>
<feature type="modified residue" description="N6-(pyridoxal phosphate)lysine" evidence="1">
    <location>
        <position position="192"/>
    </location>
</feature>
<dbReference type="EC" id="4.1.1.81"/>
<dbReference type="EMBL" id="AE004091">
    <property type="protein sequence ID" value="AAG04665.1"/>
    <property type="molecule type" value="Genomic_DNA"/>
</dbReference>
<dbReference type="PIR" id="B83486">
    <property type="entry name" value="B83486"/>
</dbReference>
<dbReference type="RefSeq" id="NP_249967.1">
    <property type="nucleotide sequence ID" value="NC_002516.2"/>
</dbReference>
<dbReference type="SMR" id="Q9I468"/>
<dbReference type="STRING" id="208964.PA1276"/>
<dbReference type="PaxDb" id="208964-PA1276"/>
<dbReference type="GeneID" id="881414"/>
<dbReference type="KEGG" id="pae:PA1276"/>
<dbReference type="PATRIC" id="fig|208964.12.peg.1326"/>
<dbReference type="PseudoCAP" id="PA1276"/>
<dbReference type="HOGENOM" id="CLU_017584_3_4_6"/>
<dbReference type="InParanoid" id="Q9I468"/>
<dbReference type="OrthoDB" id="9799304at2"/>
<dbReference type="PhylomeDB" id="Q9I468"/>
<dbReference type="BioCyc" id="PAER208964:G1FZ6-1301-MONOMER"/>
<dbReference type="UniPathway" id="UPA00148"/>
<dbReference type="Proteomes" id="UP000002438">
    <property type="component" value="Chromosome"/>
</dbReference>
<dbReference type="GO" id="GO:0005737">
    <property type="term" value="C:cytoplasm"/>
    <property type="evidence" value="ECO:0007669"/>
    <property type="project" value="UniProtKB-SubCell"/>
</dbReference>
<dbReference type="GO" id="GO:0030170">
    <property type="term" value="F:pyridoxal phosphate binding"/>
    <property type="evidence" value="ECO:0007669"/>
    <property type="project" value="InterPro"/>
</dbReference>
<dbReference type="GO" id="GO:0048472">
    <property type="term" value="F:threonine-phosphate decarboxylase activity"/>
    <property type="evidence" value="ECO:0007669"/>
    <property type="project" value="UniProtKB-EC"/>
</dbReference>
<dbReference type="GO" id="GO:0009236">
    <property type="term" value="P:cobalamin biosynthetic process"/>
    <property type="evidence" value="ECO:0007669"/>
    <property type="project" value="UniProtKB-UniPathway"/>
</dbReference>
<dbReference type="CDD" id="cd00609">
    <property type="entry name" value="AAT_like"/>
    <property type="match status" value="1"/>
</dbReference>
<dbReference type="Gene3D" id="3.90.1150.10">
    <property type="entry name" value="Aspartate Aminotransferase, domain 1"/>
    <property type="match status" value="1"/>
</dbReference>
<dbReference type="Gene3D" id="3.40.640.10">
    <property type="entry name" value="Type I PLP-dependent aspartate aminotransferase-like (Major domain)"/>
    <property type="match status" value="1"/>
</dbReference>
<dbReference type="InterPro" id="IPR004839">
    <property type="entry name" value="Aminotransferase_I/II_large"/>
</dbReference>
<dbReference type="InterPro" id="IPR005860">
    <property type="entry name" value="CobD"/>
</dbReference>
<dbReference type="InterPro" id="IPR004838">
    <property type="entry name" value="NHTrfase_class1_PyrdxlP-BS"/>
</dbReference>
<dbReference type="InterPro" id="IPR015424">
    <property type="entry name" value="PyrdxlP-dep_Trfase"/>
</dbReference>
<dbReference type="InterPro" id="IPR015421">
    <property type="entry name" value="PyrdxlP-dep_Trfase_major"/>
</dbReference>
<dbReference type="InterPro" id="IPR015422">
    <property type="entry name" value="PyrdxlP-dep_Trfase_small"/>
</dbReference>
<dbReference type="NCBIfam" id="TIGR01140">
    <property type="entry name" value="L_thr_O3P_dcar"/>
    <property type="match status" value="1"/>
</dbReference>
<dbReference type="PANTHER" id="PTHR42885">
    <property type="entry name" value="HISTIDINOL-PHOSPHATE AMINOTRANSFERASE-RELATED"/>
    <property type="match status" value="1"/>
</dbReference>
<dbReference type="PANTHER" id="PTHR42885:SF1">
    <property type="entry name" value="THREONINE-PHOSPHATE DECARBOXYLASE"/>
    <property type="match status" value="1"/>
</dbReference>
<dbReference type="Pfam" id="PF00155">
    <property type="entry name" value="Aminotran_1_2"/>
    <property type="match status" value="1"/>
</dbReference>
<dbReference type="SUPFAM" id="SSF53383">
    <property type="entry name" value="PLP-dependent transferases"/>
    <property type="match status" value="1"/>
</dbReference>
<dbReference type="PROSITE" id="PS00105">
    <property type="entry name" value="AA_TRANSFER_CLASS_1"/>
    <property type="match status" value="1"/>
</dbReference>